<proteinExistence type="inferred from homology"/>
<accession>Q7NG74</accession>
<feature type="chain" id="PRO_0000128821" description="4-hydroxy-3-methylbut-2-enyl diphosphate reductase">
    <location>
        <begin position="1"/>
        <end position="417"/>
    </location>
</feature>
<feature type="active site" description="Proton donor" evidence="1">
    <location>
        <position position="181"/>
    </location>
</feature>
<feature type="binding site" evidence="1">
    <location>
        <position position="56"/>
    </location>
    <ligand>
        <name>[4Fe-4S] cluster</name>
        <dbReference type="ChEBI" id="CHEBI:49883"/>
    </ligand>
</feature>
<feature type="binding site" evidence="1">
    <location>
        <position position="86"/>
    </location>
    <ligand>
        <name>(2E)-4-hydroxy-3-methylbut-2-enyl diphosphate</name>
        <dbReference type="ChEBI" id="CHEBI:128753"/>
    </ligand>
</feature>
<feature type="binding site" evidence="1">
    <location>
        <position position="86"/>
    </location>
    <ligand>
        <name>dimethylallyl diphosphate</name>
        <dbReference type="ChEBI" id="CHEBI:57623"/>
    </ligand>
</feature>
<feature type="binding site" evidence="1">
    <location>
        <position position="86"/>
    </location>
    <ligand>
        <name>isopentenyl diphosphate</name>
        <dbReference type="ChEBI" id="CHEBI:128769"/>
    </ligand>
</feature>
<feature type="binding site" evidence="1">
    <location>
        <position position="151"/>
    </location>
    <ligand>
        <name>[4Fe-4S] cluster</name>
        <dbReference type="ChEBI" id="CHEBI:49883"/>
    </ligand>
</feature>
<feature type="binding site" evidence="1">
    <location>
        <position position="179"/>
    </location>
    <ligand>
        <name>(2E)-4-hydroxy-3-methylbut-2-enyl diphosphate</name>
        <dbReference type="ChEBI" id="CHEBI:128753"/>
    </ligand>
</feature>
<feature type="binding site" evidence="1">
    <location>
        <position position="179"/>
    </location>
    <ligand>
        <name>dimethylallyl diphosphate</name>
        <dbReference type="ChEBI" id="CHEBI:57623"/>
    </ligand>
</feature>
<feature type="binding site" evidence="1">
    <location>
        <position position="179"/>
    </location>
    <ligand>
        <name>isopentenyl diphosphate</name>
        <dbReference type="ChEBI" id="CHEBI:128769"/>
    </ligand>
</feature>
<feature type="binding site" evidence="1">
    <location>
        <position position="244"/>
    </location>
    <ligand>
        <name>(2E)-4-hydroxy-3-methylbut-2-enyl diphosphate</name>
        <dbReference type="ChEBI" id="CHEBI:128753"/>
    </ligand>
</feature>
<feature type="binding site" evidence="1">
    <location>
        <position position="282"/>
    </location>
    <ligand>
        <name>[4Fe-4S] cluster</name>
        <dbReference type="ChEBI" id="CHEBI:49883"/>
    </ligand>
</feature>
<feature type="binding site" evidence="1">
    <location>
        <position position="311"/>
    </location>
    <ligand>
        <name>(2E)-4-hydroxy-3-methylbut-2-enyl diphosphate</name>
        <dbReference type="ChEBI" id="CHEBI:128753"/>
    </ligand>
</feature>
<feature type="binding site" evidence="1">
    <location>
        <position position="311"/>
    </location>
    <ligand>
        <name>dimethylallyl diphosphate</name>
        <dbReference type="ChEBI" id="CHEBI:57623"/>
    </ligand>
</feature>
<feature type="binding site" evidence="1">
    <location>
        <position position="311"/>
    </location>
    <ligand>
        <name>isopentenyl diphosphate</name>
        <dbReference type="ChEBI" id="CHEBI:128769"/>
    </ligand>
</feature>
<feature type="binding site" evidence="1">
    <location>
        <position position="312"/>
    </location>
    <ligand>
        <name>(2E)-4-hydroxy-3-methylbut-2-enyl diphosphate</name>
        <dbReference type="ChEBI" id="CHEBI:128753"/>
    </ligand>
</feature>
<feature type="binding site" evidence="1">
    <location>
        <position position="312"/>
    </location>
    <ligand>
        <name>dimethylallyl diphosphate</name>
        <dbReference type="ChEBI" id="CHEBI:57623"/>
    </ligand>
</feature>
<feature type="binding site" evidence="1">
    <location>
        <position position="312"/>
    </location>
    <ligand>
        <name>isopentenyl diphosphate</name>
        <dbReference type="ChEBI" id="CHEBI:128769"/>
    </ligand>
</feature>
<feature type="binding site" evidence="1">
    <location>
        <position position="313"/>
    </location>
    <ligand>
        <name>(2E)-4-hydroxy-3-methylbut-2-enyl diphosphate</name>
        <dbReference type="ChEBI" id="CHEBI:128753"/>
    </ligand>
</feature>
<feature type="binding site" evidence="1">
    <location>
        <position position="313"/>
    </location>
    <ligand>
        <name>dimethylallyl diphosphate</name>
        <dbReference type="ChEBI" id="CHEBI:57623"/>
    </ligand>
</feature>
<feature type="binding site" evidence="1">
    <location>
        <position position="313"/>
    </location>
    <ligand>
        <name>isopentenyl diphosphate</name>
        <dbReference type="ChEBI" id="CHEBI:128769"/>
    </ligand>
</feature>
<feature type="binding site" evidence="1">
    <location>
        <position position="374"/>
    </location>
    <ligand>
        <name>(2E)-4-hydroxy-3-methylbut-2-enyl diphosphate</name>
        <dbReference type="ChEBI" id="CHEBI:128753"/>
    </ligand>
</feature>
<feature type="binding site" evidence="1">
    <location>
        <position position="374"/>
    </location>
    <ligand>
        <name>dimethylallyl diphosphate</name>
        <dbReference type="ChEBI" id="CHEBI:57623"/>
    </ligand>
</feature>
<feature type="binding site" evidence="1">
    <location>
        <position position="374"/>
    </location>
    <ligand>
        <name>isopentenyl diphosphate</name>
        <dbReference type="ChEBI" id="CHEBI:128769"/>
    </ligand>
</feature>
<name>ISPH_GLOVI</name>
<sequence>MQSKNYFRKGFGLKAEVQDDLKAEYESSLIHEIRANGYTLRRGGVTVRLAEAFGFCWGVDKAVSMAYETHRMFAGRQLWITNEIIHNPLVNQHLRAMGIRFLDEDESGRRVPKDFERVSEKDVVILPAFGASTQEMQILDEKNCVIVDTTCPWVSAVWNRVGKYDRAEFTSIIHGKYQHEETVATASRARRYLVVLNLEEAQQVCDYILHGGDRRAFLAHFGMAACEGFDPDRDLVRVGIANQTTMLKGETERIGKLFERTMMRRYGPANLADHFMSHDTICDATQERQDAMFKLVEEPLDLLVVIGGYNSSNTTHLQEIAVERGLPSFHIDGADRLVSAQFIEHRDLHSKSLVRTKNWLPAGEVTVGVTAGASTPDRVVAEVIARIFELKGVGESGATGAISSPVLSSAEGGPSLS</sequence>
<dbReference type="EC" id="1.17.7.4" evidence="1"/>
<dbReference type="EMBL" id="BA000045">
    <property type="protein sequence ID" value="BAC91240.1"/>
    <property type="molecule type" value="Genomic_DNA"/>
</dbReference>
<dbReference type="RefSeq" id="NP_926245.1">
    <property type="nucleotide sequence ID" value="NC_005125.1"/>
</dbReference>
<dbReference type="RefSeq" id="WP_011143289.1">
    <property type="nucleotide sequence ID" value="NC_005125.1"/>
</dbReference>
<dbReference type="SMR" id="Q7NG74"/>
<dbReference type="FunCoup" id="Q7NG74">
    <property type="interactions" value="123"/>
</dbReference>
<dbReference type="STRING" id="251221.gene:10760809"/>
<dbReference type="EnsemblBacteria" id="BAC91240">
    <property type="protein sequence ID" value="BAC91240"/>
    <property type="gene ID" value="BAC91240"/>
</dbReference>
<dbReference type="KEGG" id="gvi:glr3299"/>
<dbReference type="PATRIC" id="fig|251221.4.peg.3331"/>
<dbReference type="eggNOG" id="COG0761">
    <property type="taxonomic scope" value="Bacteria"/>
</dbReference>
<dbReference type="HOGENOM" id="CLU_027486_4_0_3"/>
<dbReference type="InParanoid" id="Q7NG74"/>
<dbReference type="OrthoDB" id="9804077at2"/>
<dbReference type="PhylomeDB" id="Q7NG74"/>
<dbReference type="UniPathway" id="UPA00056">
    <property type="reaction ID" value="UER00097"/>
</dbReference>
<dbReference type="UniPathway" id="UPA00059">
    <property type="reaction ID" value="UER00105"/>
</dbReference>
<dbReference type="Proteomes" id="UP000000557">
    <property type="component" value="Chromosome"/>
</dbReference>
<dbReference type="GO" id="GO:0051539">
    <property type="term" value="F:4 iron, 4 sulfur cluster binding"/>
    <property type="evidence" value="ECO:0007669"/>
    <property type="project" value="UniProtKB-UniRule"/>
</dbReference>
<dbReference type="GO" id="GO:0051745">
    <property type="term" value="F:4-hydroxy-3-methylbut-2-enyl diphosphate reductase activity"/>
    <property type="evidence" value="ECO:0007669"/>
    <property type="project" value="UniProtKB-UniRule"/>
</dbReference>
<dbReference type="GO" id="GO:0046872">
    <property type="term" value="F:metal ion binding"/>
    <property type="evidence" value="ECO:0007669"/>
    <property type="project" value="UniProtKB-KW"/>
</dbReference>
<dbReference type="GO" id="GO:0050992">
    <property type="term" value="P:dimethylallyl diphosphate biosynthetic process"/>
    <property type="evidence" value="ECO:0007669"/>
    <property type="project" value="UniProtKB-UniRule"/>
</dbReference>
<dbReference type="GO" id="GO:0019288">
    <property type="term" value="P:isopentenyl diphosphate biosynthetic process, methylerythritol 4-phosphate pathway"/>
    <property type="evidence" value="ECO:0007669"/>
    <property type="project" value="UniProtKB-UniRule"/>
</dbReference>
<dbReference type="GO" id="GO:0016114">
    <property type="term" value="P:terpenoid biosynthetic process"/>
    <property type="evidence" value="ECO:0007669"/>
    <property type="project" value="UniProtKB-UniRule"/>
</dbReference>
<dbReference type="CDD" id="cd13944">
    <property type="entry name" value="lytB_ispH"/>
    <property type="match status" value="1"/>
</dbReference>
<dbReference type="Gene3D" id="3.40.50.11270">
    <property type="match status" value="1"/>
</dbReference>
<dbReference type="Gene3D" id="3.40.1010.20">
    <property type="entry name" value="4-hydroxy-3-methylbut-2-enyl diphosphate reductase, catalytic domain"/>
    <property type="match status" value="2"/>
</dbReference>
<dbReference type="HAMAP" id="MF_00191">
    <property type="entry name" value="IspH"/>
    <property type="match status" value="1"/>
</dbReference>
<dbReference type="InterPro" id="IPR003451">
    <property type="entry name" value="LytB/IspH"/>
</dbReference>
<dbReference type="NCBIfam" id="TIGR00216">
    <property type="entry name" value="ispH_lytB"/>
    <property type="match status" value="1"/>
</dbReference>
<dbReference type="NCBIfam" id="NF009911">
    <property type="entry name" value="PRK13371.1"/>
    <property type="match status" value="1"/>
</dbReference>
<dbReference type="PANTHER" id="PTHR31619">
    <property type="entry name" value="4-HYDROXY-3-METHYLBUT-2-ENYL DIPHOSPHATE REDUCTASE, CHLOROPLASTIC"/>
    <property type="match status" value="1"/>
</dbReference>
<dbReference type="PANTHER" id="PTHR31619:SF5">
    <property type="entry name" value="4-HYDROXY-3-METHYLBUT-2-ENYL DIPHOSPHATE REDUCTASE, CHLOROPLASTIC"/>
    <property type="match status" value="1"/>
</dbReference>
<dbReference type="Pfam" id="PF02401">
    <property type="entry name" value="LYTB"/>
    <property type="match status" value="1"/>
</dbReference>
<keyword id="KW-0004">4Fe-4S</keyword>
<keyword id="KW-0408">Iron</keyword>
<keyword id="KW-0411">Iron-sulfur</keyword>
<keyword id="KW-0414">Isoprene biosynthesis</keyword>
<keyword id="KW-0479">Metal-binding</keyword>
<keyword id="KW-0560">Oxidoreductase</keyword>
<keyword id="KW-1185">Reference proteome</keyword>
<comment type="function">
    <text evidence="1">Catalyzes the conversion of 1-hydroxy-2-methyl-2-(E)-butenyl 4-diphosphate (HMBPP) into a mixture of isopentenyl diphosphate (IPP) and dimethylallyl diphosphate (DMAPP). Acts in the terminal step of the DOXP/MEP pathway for isoprenoid precursor biosynthesis.</text>
</comment>
<comment type="catalytic activity">
    <reaction evidence="1">
        <text>isopentenyl diphosphate + 2 oxidized [2Fe-2S]-[ferredoxin] + H2O = (2E)-4-hydroxy-3-methylbut-2-enyl diphosphate + 2 reduced [2Fe-2S]-[ferredoxin] + 2 H(+)</text>
        <dbReference type="Rhea" id="RHEA:24488"/>
        <dbReference type="Rhea" id="RHEA-COMP:10000"/>
        <dbReference type="Rhea" id="RHEA-COMP:10001"/>
        <dbReference type="ChEBI" id="CHEBI:15377"/>
        <dbReference type="ChEBI" id="CHEBI:15378"/>
        <dbReference type="ChEBI" id="CHEBI:33737"/>
        <dbReference type="ChEBI" id="CHEBI:33738"/>
        <dbReference type="ChEBI" id="CHEBI:128753"/>
        <dbReference type="ChEBI" id="CHEBI:128769"/>
        <dbReference type="EC" id="1.17.7.4"/>
    </reaction>
</comment>
<comment type="catalytic activity">
    <reaction evidence="1">
        <text>dimethylallyl diphosphate + 2 oxidized [2Fe-2S]-[ferredoxin] + H2O = (2E)-4-hydroxy-3-methylbut-2-enyl diphosphate + 2 reduced [2Fe-2S]-[ferredoxin] + 2 H(+)</text>
        <dbReference type="Rhea" id="RHEA:24825"/>
        <dbReference type="Rhea" id="RHEA-COMP:10000"/>
        <dbReference type="Rhea" id="RHEA-COMP:10001"/>
        <dbReference type="ChEBI" id="CHEBI:15377"/>
        <dbReference type="ChEBI" id="CHEBI:15378"/>
        <dbReference type="ChEBI" id="CHEBI:33737"/>
        <dbReference type="ChEBI" id="CHEBI:33738"/>
        <dbReference type="ChEBI" id="CHEBI:57623"/>
        <dbReference type="ChEBI" id="CHEBI:128753"/>
        <dbReference type="EC" id="1.17.7.4"/>
    </reaction>
</comment>
<comment type="cofactor">
    <cofactor evidence="1">
        <name>[4Fe-4S] cluster</name>
        <dbReference type="ChEBI" id="CHEBI:49883"/>
    </cofactor>
    <text evidence="1">Binds 1 [4Fe-4S] cluster per subunit.</text>
</comment>
<comment type="pathway">
    <text evidence="1">Isoprenoid biosynthesis; dimethylallyl diphosphate biosynthesis; dimethylallyl diphosphate from (2E)-4-hydroxy-3-methylbutenyl diphosphate: step 1/1.</text>
</comment>
<comment type="pathway">
    <text evidence="1">Isoprenoid biosynthesis; isopentenyl diphosphate biosynthesis via DXP pathway; isopentenyl diphosphate from 1-deoxy-D-xylulose 5-phosphate: step 6/6.</text>
</comment>
<comment type="similarity">
    <text evidence="1">Belongs to the IspH family.</text>
</comment>
<evidence type="ECO:0000255" key="1">
    <source>
        <dbReference type="HAMAP-Rule" id="MF_00191"/>
    </source>
</evidence>
<protein>
    <recommendedName>
        <fullName evidence="1">4-hydroxy-3-methylbut-2-enyl diphosphate reductase</fullName>
        <shortName evidence="1">HMBPP reductase</shortName>
        <ecNumber evidence="1">1.17.7.4</ecNumber>
    </recommendedName>
</protein>
<gene>
    <name evidence="1" type="primary">ispH</name>
    <name type="ordered locus">glr3299</name>
</gene>
<reference key="1">
    <citation type="journal article" date="2003" name="DNA Res.">
        <title>Complete genome structure of Gloeobacter violaceus PCC 7421, a cyanobacterium that lacks thylakoids.</title>
        <authorList>
            <person name="Nakamura Y."/>
            <person name="Kaneko T."/>
            <person name="Sato S."/>
            <person name="Mimuro M."/>
            <person name="Miyashita H."/>
            <person name="Tsuchiya T."/>
            <person name="Sasamoto S."/>
            <person name="Watanabe A."/>
            <person name="Kawashima K."/>
            <person name="Kishida Y."/>
            <person name="Kiyokawa C."/>
            <person name="Kohara M."/>
            <person name="Matsumoto M."/>
            <person name="Matsuno A."/>
            <person name="Nakazaki N."/>
            <person name="Shimpo S."/>
            <person name="Takeuchi C."/>
            <person name="Yamada M."/>
            <person name="Tabata S."/>
        </authorList>
    </citation>
    <scope>NUCLEOTIDE SEQUENCE [LARGE SCALE GENOMIC DNA]</scope>
    <source>
        <strain>ATCC 29082 / PCC 7421</strain>
    </source>
</reference>
<organism>
    <name type="scientific">Gloeobacter violaceus (strain ATCC 29082 / PCC 7421)</name>
    <dbReference type="NCBI Taxonomy" id="251221"/>
    <lineage>
        <taxon>Bacteria</taxon>
        <taxon>Bacillati</taxon>
        <taxon>Cyanobacteriota</taxon>
        <taxon>Cyanophyceae</taxon>
        <taxon>Gloeobacterales</taxon>
        <taxon>Gloeobacteraceae</taxon>
        <taxon>Gloeobacter</taxon>
    </lineage>
</organism>